<reference key="1">
    <citation type="journal article" date="2002" name="Nature">
        <title>The genome sequence of Schizosaccharomyces pombe.</title>
        <authorList>
            <person name="Wood V."/>
            <person name="Gwilliam R."/>
            <person name="Rajandream M.A."/>
            <person name="Lyne M.H."/>
            <person name="Lyne R."/>
            <person name="Stewart A."/>
            <person name="Sgouros J.G."/>
            <person name="Peat N."/>
            <person name="Hayles J."/>
            <person name="Baker S.G."/>
            <person name="Basham D."/>
            <person name="Bowman S."/>
            <person name="Brooks K."/>
            <person name="Brown D."/>
            <person name="Brown S."/>
            <person name="Chillingworth T."/>
            <person name="Churcher C.M."/>
            <person name="Collins M."/>
            <person name="Connor R."/>
            <person name="Cronin A."/>
            <person name="Davis P."/>
            <person name="Feltwell T."/>
            <person name="Fraser A."/>
            <person name="Gentles S."/>
            <person name="Goble A."/>
            <person name="Hamlin N."/>
            <person name="Harris D.E."/>
            <person name="Hidalgo J."/>
            <person name="Hodgson G."/>
            <person name="Holroyd S."/>
            <person name="Hornsby T."/>
            <person name="Howarth S."/>
            <person name="Huckle E.J."/>
            <person name="Hunt S."/>
            <person name="Jagels K."/>
            <person name="James K.D."/>
            <person name="Jones L."/>
            <person name="Jones M."/>
            <person name="Leather S."/>
            <person name="McDonald S."/>
            <person name="McLean J."/>
            <person name="Mooney P."/>
            <person name="Moule S."/>
            <person name="Mungall K.L."/>
            <person name="Murphy L.D."/>
            <person name="Niblett D."/>
            <person name="Odell C."/>
            <person name="Oliver K."/>
            <person name="O'Neil S."/>
            <person name="Pearson D."/>
            <person name="Quail M.A."/>
            <person name="Rabbinowitsch E."/>
            <person name="Rutherford K.M."/>
            <person name="Rutter S."/>
            <person name="Saunders D."/>
            <person name="Seeger K."/>
            <person name="Sharp S."/>
            <person name="Skelton J."/>
            <person name="Simmonds M.N."/>
            <person name="Squares R."/>
            <person name="Squares S."/>
            <person name="Stevens K."/>
            <person name="Taylor K."/>
            <person name="Taylor R.G."/>
            <person name="Tivey A."/>
            <person name="Walsh S.V."/>
            <person name="Warren T."/>
            <person name="Whitehead S."/>
            <person name="Woodward J.R."/>
            <person name="Volckaert G."/>
            <person name="Aert R."/>
            <person name="Robben J."/>
            <person name="Grymonprez B."/>
            <person name="Weltjens I."/>
            <person name="Vanstreels E."/>
            <person name="Rieger M."/>
            <person name="Schaefer M."/>
            <person name="Mueller-Auer S."/>
            <person name="Gabel C."/>
            <person name="Fuchs M."/>
            <person name="Duesterhoeft A."/>
            <person name="Fritzc C."/>
            <person name="Holzer E."/>
            <person name="Moestl D."/>
            <person name="Hilbert H."/>
            <person name="Borzym K."/>
            <person name="Langer I."/>
            <person name="Beck A."/>
            <person name="Lehrach H."/>
            <person name="Reinhardt R."/>
            <person name="Pohl T.M."/>
            <person name="Eger P."/>
            <person name="Zimmermann W."/>
            <person name="Wedler H."/>
            <person name="Wambutt R."/>
            <person name="Purnelle B."/>
            <person name="Goffeau A."/>
            <person name="Cadieu E."/>
            <person name="Dreano S."/>
            <person name="Gloux S."/>
            <person name="Lelaure V."/>
            <person name="Mottier S."/>
            <person name="Galibert F."/>
            <person name="Aves S.J."/>
            <person name="Xiang Z."/>
            <person name="Hunt C."/>
            <person name="Moore K."/>
            <person name="Hurst S.M."/>
            <person name="Lucas M."/>
            <person name="Rochet M."/>
            <person name="Gaillardin C."/>
            <person name="Tallada V.A."/>
            <person name="Garzon A."/>
            <person name="Thode G."/>
            <person name="Daga R.R."/>
            <person name="Cruzado L."/>
            <person name="Jimenez J."/>
            <person name="Sanchez M."/>
            <person name="del Rey F."/>
            <person name="Benito J."/>
            <person name="Dominguez A."/>
            <person name="Revuelta J.L."/>
            <person name="Moreno S."/>
            <person name="Armstrong J."/>
            <person name="Forsburg S.L."/>
            <person name="Cerutti L."/>
            <person name="Lowe T."/>
            <person name="McCombie W.R."/>
            <person name="Paulsen I."/>
            <person name="Potashkin J."/>
            <person name="Shpakovski G.V."/>
            <person name="Ussery D."/>
            <person name="Barrell B.G."/>
            <person name="Nurse P."/>
        </authorList>
    </citation>
    <scope>NUCLEOTIDE SEQUENCE [LARGE SCALE GENOMIC DNA]</scope>
    <source>
        <strain>972 / ATCC 24843</strain>
    </source>
</reference>
<reference key="2">
    <citation type="journal article" date="2006" name="Nat. Biotechnol.">
        <title>ORFeome cloning and global analysis of protein localization in the fission yeast Schizosaccharomyces pombe.</title>
        <authorList>
            <person name="Matsuyama A."/>
            <person name="Arai R."/>
            <person name="Yashiroda Y."/>
            <person name="Shirai A."/>
            <person name="Kamata A."/>
            <person name="Sekido S."/>
            <person name="Kobayashi Y."/>
            <person name="Hashimoto A."/>
            <person name="Hamamoto M."/>
            <person name="Hiraoka Y."/>
            <person name="Horinouchi S."/>
            <person name="Yoshida M."/>
        </authorList>
    </citation>
    <scope>SUBCELLULAR LOCATION [LARGE SCALE ANALYSIS]</scope>
</reference>
<feature type="transit peptide" description="Mitochondrion" evidence="1">
    <location>
        <begin position="1"/>
        <end position="66"/>
    </location>
</feature>
<feature type="chain" id="PRO_0000314109" description="DnaJ homolog 1, mitochondrial">
    <location>
        <begin position="67"/>
        <end position="528"/>
    </location>
</feature>
<feature type="domain" description="J">
    <location>
        <begin position="86"/>
        <end position="150"/>
    </location>
</feature>
<feature type="repeat" description="CXXCXGXG motif">
    <location>
        <begin position="240"/>
        <end position="247"/>
    </location>
</feature>
<feature type="repeat" description="CXXCXGXG motif">
    <location>
        <begin position="257"/>
        <end position="264"/>
    </location>
</feature>
<feature type="repeat" description="CXXCXGXG motif">
    <location>
        <begin position="280"/>
        <end position="287"/>
    </location>
</feature>
<feature type="repeat" description="CXXCXGXG motif">
    <location>
        <begin position="296"/>
        <end position="303"/>
    </location>
</feature>
<feature type="zinc finger region" description="CR-type">
    <location>
        <begin position="227"/>
        <end position="308"/>
    </location>
</feature>
<feature type="region of interest" description="Disordered" evidence="2">
    <location>
        <begin position="455"/>
        <end position="528"/>
    </location>
</feature>
<feature type="compositionally biased region" description="Low complexity" evidence="2">
    <location>
        <begin position="462"/>
        <end position="488"/>
    </location>
</feature>
<feature type="compositionally biased region" description="Basic and acidic residues" evidence="2">
    <location>
        <begin position="513"/>
        <end position="528"/>
    </location>
</feature>
<sequence>MFSKYLQSRVCGLHSFTNSSAQQLFSKSIAHSSRRNFVISSSCTKFRNVAIQRNAKREFSRCAALKNFSYHARCFHATRAVWEMTDPYKTLGVSKSASASEIKSAYYKLAKQYHPDANPDKAAQDKFVEIKQAYEVLQDPKKKKAFDTYGAGAFKNGEFTGGDFEGFQNGFAGASSFSSGFPGFNFEDLFGFSSRGPQARRNTSFDVFVGEDIEASITIDFMEAVRGAKKDLSYSVSSTCSSCHGSGLQPGSHKSTCFACKGTGQRLHFIPPSFHMQTTCDSCGGTGTTIPPNSACRSCMGSGTVRERKTVSIDIPPGIDDNTVLRVMGAGNDASTAKGGPNAKSRPGDLFATIHVRKHPFFVREGTNVTYNAKIPMTTAALGGTLRVPTLTGNVDLRVSPGTSTGDRITMAGKGIRKVNTSRYGNFYVNFEVTIPKILSPHERSLLEQLADALNDSTARRTQSSPSGTNSSTSTSSTSSKHSTGISTEPTTGEENKQDGSVGGFFKRAFRRLHPDEDQNPKKDESSS</sequence>
<comment type="subcellular location">
    <subcellularLocation>
        <location evidence="3">Mitochondrion</location>
    </subcellularLocation>
</comment>
<name>MDJ1_SCHPO</name>
<proteinExistence type="inferred from homology"/>
<dbReference type="EMBL" id="CU329672">
    <property type="protein sequence ID" value="CAB09769.1"/>
    <property type="molecule type" value="Genomic_DNA"/>
</dbReference>
<dbReference type="PIR" id="T41362">
    <property type="entry name" value="T41362"/>
</dbReference>
<dbReference type="RefSeq" id="NP_587824.1">
    <property type="nucleotide sequence ID" value="NM_001022817.2"/>
</dbReference>
<dbReference type="SMR" id="P87239"/>
<dbReference type="BioGRID" id="276064">
    <property type="interactions" value="2"/>
</dbReference>
<dbReference type="FunCoup" id="P87239">
    <property type="interactions" value="535"/>
</dbReference>
<dbReference type="STRING" id="284812.P87239"/>
<dbReference type="iPTMnet" id="P87239"/>
<dbReference type="PaxDb" id="4896-SPCC4G3.14.1"/>
<dbReference type="EnsemblFungi" id="SPCC4G3.14.1">
    <property type="protein sequence ID" value="SPCC4G3.14.1:pep"/>
    <property type="gene ID" value="SPCC4G3.14"/>
</dbReference>
<dbReference type="GeneID" id="2539501"/>
<dbReference type="KEGG" id="spo:2539501"/>
<dbReference type="PomBase" id="SPCC4G3.14">
    <property type="gene designation" value="mdj1"/>
</dbReference>
<dbReference type="VEuPathDB" id="FungiDB:SPCC4G3.14"/>
<dbReference type="eggNOG" id="KOG0715">
    <property type="taxonomic scope" value="Eukaryota"/>
</dbReference>
<dbReference type="HOGENOM" id="CLU_017633_0_3_1"/>
<dbReference type="InParanoid" id="P87239"/>
<dbReference type="OMA" id="MATDYYA"/>
<dbReference type="PhylomeDB" id="P87239"/>
<dbReference type="PRO" id="PR:P87239"/>
<dbReference type="Proteomes" id="UP000002485">
    <property type="component" value="Chromosome III"/>
</dbReference>
<dbReference type="GO" id="GO:0005737">
    <property type="term" value="C:cytoplasm"/>
    <property type="evidence" value="ECO:0000318"/>
    <property type="project" value="GO_Central"/>
</dbReference>
<dbReference type="GO" id="GO:0005743">
    <property type="term" value="C:mitochondrial inner membrane"/>
    <property type="evidence" value="ECO:0000266"/>
    <property type="project" value="PomBase"/>
</dbReference>
<dbReference type="GO" id="GO:0005739">
    <property type="term" value="C:mitochondrion"/>
    <property type="evidence" value="ECO:0007005"/>
    <property type="project" value="PomBase"/>
</dbReference>
<dbReference type="GO" id="GO:0005524">
    <property type="term" value="F:ATP binding"/>
    <property type="evidence" value="ECO:0007669"/>
    <property type="project" value="InterPro"/>
</dbReference>
<dbReference type="GO" id="GO:0030544">
    <property type="term" value="F:Hsp70 protein binding"/>
    <property type="evidence" value="ECO:0000255"/>
    <property type="project" value="PomBase"/>
</dbReference>
<dbReference type="GO" id="GO:0051082">
    <property type="term" value="F:unfolded protein binding"/>
    <property type="evidence" value="ECO:0000318"/>
    <property type="project" value="GO_Central"/>
</dbReference>
<dbReference type="GO" id="GO:0008270">
    <property type="term" value="F:zinc ion binding"/>
    <property type="evidence" value="ECO:0007669"/>
    <property type="project" value="UniProtKB-KW"/>
</dbReference>
<dbReference type="GO" id="GO:0051085">
    <property type="term" value="P:chaperone cofactor-dependent protein refolding"/>
    <property type="evidence" value="ECO:0000318"/>
    <property type="project" value="GO_Central"/>
</dbReference>
<dbReference type="GO" id="GO:0042026">
    <property type="term" value="P:protein refolding"/>
    <property type="evidence" value="ECO:0000318"/>
    <property type="project" value="GO_Central"/>
</dbReference>
<dbReference type="GO" id="GO:0009408">
    <property type="term" value="P:response to heat"/>
    <property type="evidence" value="ECO:0007669"/>
    <property type="project" value="InterPro"/>
</dbReference>
<dbReference type="CDD" id="cd06257">
    <property type="entry name" value="DnaJ"/>
    <property type="match status" value="1"/>
</dbReference>
<dbReference type="CDD" id="cd10747">
    <property type="entry name" value="DnaJ_C"/>
    <property type="match status" value="1"/>
</dbReference>
<dbReference type="CDD" id="cd10719">
    <property type="entry name" value="DnaJ_zf"/>
    <property type="match status" value="1"/>
</dbReference>
<dbReference type="FunFam" id="2.60.260.20:FF:000005">
    <property type="entry name" value="Chaperone protein dnaJ 1, mitochondrial"/>
    <property type="match status" value="1"/>
</dbReference>
<dbReference type="FunFam" id="2.10.230.10:FF:000001">
    <property type="entry name" value="DnaJ subfamily A member 2"/>
    <property type="match status" value="1"/>
</dbReference>
<dbReference type="Gene3D" id="1.10.287.110">
    <property type="entry name" value="DnaJ domain"/>
    <property type="match status" value="1"/>
</dbReference>
<dbReference type="Gene3D" id="2.10.230.10">
    <property type="entry name" value="Heat shock protein DnaJ, cysteine-rich domain"/>
    <property type="match status" value="1"/>
</dbReference>
<dbReference type="Gene3D" id="2.60.260.20">
    <property type="entry name" value="Urease metallochaperone UreE, N-terminal domain"/>
    <property type="match status" value="2"/>
</dbReference>
<dbReference type="HAMAP" id="MF_01152">
    <property type="entry name" value="DnaJ"/>
    <property type="match status" value="1"/>
</dbReference>
<dbReference type="InterPro" id="IPR012724">
    <property type="entry name" value="DnaJ"/>
</dbReference>
<dbReference type="InterPro" id="IPR002939">
    <property type="entry name" value="DnaJ_C"/>
</dbReference>
<dbReference type="InterPro" id="IPR001623">
    <property type="entry name" value="DnaJ_domain"/>
</dbReference>
<dbReference type="InterPro" id="IPR018253">
    <property type="entry name" value="DnaJ_domain_CS"/>
</dbReference>
<dbReference type="InterPro" id="IPR008971">
    <property type="entry name" value="HSP40/DnaJ_pept-bd"/>
</dbReference>
<dbReference type="InterPro" id="IPR001305">
    <property type="entry name" value="HSP_DnaJ_Cys-rich_dom"/>
</dbReference>
<dbReference type="InterPro" id="IPR036410">
    <property type="entry name" value="HSP_DnaJ_Cys-rich_dom_sf"/>
</dbReference>
<dbReference type="InterPro" id="IPR036869">
    <property type="entry name" value="J_dom_sf"/>
</dbReference>
<dbReference type="PANTHER" id="PTHR43096">
    <property type="entry name" value="DNAJ HOMOLOG 1, MITOCHONDRIAL-RELATED"/>
    <property type="match status" value="1"/>
</dbReference>
<dbReference type="PANTHER" id="PTHR43096:SF52">
    <property type="entry name" value="DNAJ HOMOLOG 1, MITOCHONDRIAL-RELATED"/>
    <property type="match status" value="1"/>
</dbReference>
<dbReference type="Pfam" id="PF00226">
    <property type="entry name" value="DnaJ"/>
    <property type="match status" value="1"/>
</dbReference>
<dbReference type="Pfam" id="PF01556">
    <property type="entry name" value="DnaJ_C"/>
    <property type="match status" value="1"/>
</dbReference>
<dbReference type="Pfam" id="PF00684">
    <property type="entry name" value="DnaJ_CXXCXGXG"/>
    <property type="match status" value="1"/>
</dbReference>
<dbReference type="PRINTS" id="PR00625">
    <property type="entry name" value="JDOMAIN"/>
</dbReference>
<dbReference type="SMART" id="SM00271">
    <property type="entry name" value="DnaJ"/>
    <property type="match status" value="1"/>
</dbReference>
<dbReference type="SUPFAM" id="SSF46565">
    <property type="entry name" value="Chaperone J-domain"/>
    <property type="match status" value="1"/>
</dbReference>
<dbReference type="SUPFAM" id="SSF57938">
    <property type="entry name" value="DnaJ/Hsp40 cysteine-rich domain"/>
    <property type="match status" value="1"/>
</dbReference>
<dbReference type="SUPFAM" id="SSF49493">
    <property type="entry name" value="HSP40/DnaJ peptide-binding domain"/>
    <property type="match status" value="2"/>
</dbReference>
<dbReference type="PROSITE" id="PS00636">
    <property type="entry name" value="DNAJ_1"/>
    <property type="match status" value="1"/>
</dbReference>
<dbReference type="PROSITE" id="PS50076">
    <property type="entry name" value="DNAJ_2"/>
    <property type="match status" value="1"/>
</dbReference>
<dbReference type="PROSITE" id="PS51188">
    <property type="entry name" value="ZF_CR"/>
    <property type="match status" value="1"/>
</dbReference>
<evidence type="ECO:0000255" key="1"/>
<evidence type="ECO:0000256" key="2">
    <source>
        <dbReference type="SAM" id="MobiDB-lite"/>
    </source>
</evidence>
<evidence type="ECO:0000269" key="3">
    <source>
    </source>
</evidence>
<keyword id="KW-0143">Chaperone</keyword>
<keyword id="KW-0479">Metal-binding</keyword>
<keyword id="KW-0496">Mitochondrion</keyword>
<keyword id="KW-1185">Reference proteome</keyword>
<keyword id="KW-0677">Repeat</keyword>
<keyword id="KW-0809">Transit peptide</keyword>
<keyword id="KW-0862">Zinc</keyword>
<keyword id="KW-0863">Zinc-finger</keyword>
<organism>
    <name type="scientific">Schizosaccharomyces pombe (strain 972 / ATCC 24843)</name>
    <name type="common">Fission yeast</name>
    <dbReference type="NCBI Taxonomy" id="284812"/>
    <lineage>
        <taxon>Eukaryota</taxon>
        <taxon>Fungi</taxon>
        <taxon>Dikarya</taxon>
        <taxon>Ascomycota</taxon>
        <taxon>Taphrinomycotina</taxon>
        <taxon>Schizosaccharomycetes</taxon>
        <taxon>Schizosaccharomycetales</taxon>
        <taxon>Schizosaccharomycetaceae</taxon>
        <taxon>Schizosaccharomyces</taxon>
    </lineage>
</organism>
<protein>
    <recommendedName>
        <fullName>DnaJ homolog 1, mitochondrial</fullName>
    </recommendedName>
</protein>
<gene>
    <name type="primary">mdj1</name>
    <name type="ORF">SPCC4G3.14</name>
</gene>
<accession>P87239</accession>